<name>CC160_HUMAN</name>
<evidence type="ECO:0000255" key="1"/>
<evidence type="ECO:0000256" key="2">
    <source>
        <dbReference type="SAM" id="MobiDB-lite"/>
    </source>
</evidence>
<evidence type="ECO:0000305" key="3"/>
<feature type="chain" id="PRO_0000345951" description="Coiled-coil domain-containing protein 160">
    <location>
        <begin position="1"/>
        <end position="325"/>
    </location>
</feature>
<feature type="region of interest" description="Disordered" evidence="2">
    <location>
        <begin position="18"/>
        <end position="45"/>
    </location>
</feature>
<feature type="region of interest" description="Disordered" evidence="2">
    <location>
        <begin position="81"/>
        <end position="123"/>
    </location>
</feature>
<feature type="coiled-coil region" evidence="1">
    <location>
        <begin position="144"/>
        <end position="288"/>
    </location>
</feature>
<feature type="compositionally biased region" description="Basic and acidic residues" evidence="2">
    <location>
        <begin position="81"/>
        <end position="91"/>
    </location>
</feature>
<feature type="compositionally biased region" description="Polar residues" evidence="2">
    <location>
        <begin position="92"/>
        <end position="123"/>
    </location>
</feature>
<accession>A6NGH7</accession>
<keyword id="KW-0175">Coiled coil</keyword>
<keyword id="KW-1267">Proteomics identification</keyword>
<keyword id="KW-1185">Reference proteome</keyword>
<protein>
    <recommendedName>
        <fullName>Coiled-coil domain-containing protein 160</fullName>
    </recommendedName>
</protein>
<reference key="1">
    <citation type="journal article" date="2005" name="Nature">
        <title>The DNA sequence of the human X chromosome.</title>
        <authorList>
            <person name="Ross M.T."/>
            <person name="Grafham D.V."/>
            <person name="Coffey A.J."/>
            <person name="Scherer S."/>
            <person name="McLay K."/>
            <person name="Muzny D."/>
            <person name="Platzer M."/>
            <person name="Howell G.R."/>
            <person name="Burrows C."/>
            <person name="Bird C.P."/>
            <person name="Frankish A."/>
            <person name="Lovell F.L."/>
            <person name="Howe K.L."/>
            <person name="Ashurst J.L."/>
            <person name="Fulton R.S."/>
            <person name="Sudbrak R."/>
            <person name="Wen G."/>
            <person name="Jones M.C."/>
            <person name="Hurles M.E."/>
            <person name="Andrews T.D."/>
            <person name="Scott C.E."/>
            <person name="Searle S."/>
            <person name="Ramser J."/>
            <person name="Whittaker A."/>
            <person name="Deadman R."/>
            <person name="Carter N.P."/>
            <person name="Hunt S.E."/>
            <person name="Chen R."/>
            <person name="Cree A."/>
            <person name="Gunaratne P."/>
            <person name="Havlak P."/>
            <person name="Hodgson A."/>
            <person name="Metzker M.L."/>
            <person name="Richards S."/>
            <person name="Scott G."/>
            <person name="Steffen D."/>
            <person name="Sodergren E."/>
            <person name="Wheeler D.A."/>
            <person name="Worley K.C."/>
            <person name="Ainscough R."/>
            <person name="Ambrose K.D."/>
            <person name="Ansari-Lari M.A."/>
            <person name="Aradhya S."/>
            <person name="Ashwell R.I."/>
            <person name="Babbage A.K."/>
            <person name="Bagguley C.L."/>
            <person name="Ballabio A."/>
            <person name="Banerjee R."/>
            <person name="Barker G.E."/>
            <person name="Barlow K.F."/>
            <person name="Barrett I.P."/>
            <person name="Bates K.N."/>
            <person name="Beare D.M."/>
            <person name="Beasley H."/>
            <person name="Beasley O."/>
            <person name="Beck A."/>
            <person name="Bethel G."/>
            <person name="Blechschmidt K."/>
            <person name="Brady N."/>
            <person name="Bray-Allen S."/>
            <person name="Bridgeman A.M."/>
            <person name="Brown A.J."/>
            <person name="Brown M.J."/>
            <person name="Bonnin D."/>
            <person name="Bruford E.A."/>
            <person name="Buhay C."/>
            <person name="Burch P."/>
            <person name="Burford D."/>
            <person name="Burgess J."/>
            <person name="Burrill W."/>
            <person name="Burton J."/>
            <person name="Bye J.M."/>
            <person name="Carder C."/>
            <person name="Carrel L."/>
            <person name="Chako J."/>
            <person name="Chapman J.C."/>
            <person name="Chavez D."/>
            <person name="Chen E."/>
            <person name="Chen G."/>
            <person name="Chen Y."/>
            <person name="Chen Z."/>
            <person name="Chinault C."/>
            <person name="Ciccodicola A."/>
            <person name="Clark S.Y."/>
            <person name="Clarke G."/>
            <person name="Clee C.M."/>
            <person name="Clegg S."/>
            <person name="Clerc-Blankenburg K."/>
            <person name="Clifford K."/>
            <person name="Cobley V."/>
            <person name="Cole C.G."/>
            <person name="Conquer J.S."/>
            <person name="Corby N."/>
            <person name="Connor R.E."/>
            <person name="David R."/>
            <person name="Davies J."/>
            <person name="Davis C."/>
            <person name="Davis J."/>
            <person name="Delgado O."/>
            <person name="Deshazo D."/>
            <person name="Dhami P."/>
            <person name="Ding Y."/>
            <person name="Dinh H."/>
            <person name="Dodsworth S."/>
            <person name="Draper H."/>
            <person name="Dugan-Rocha S."/>
            <person name="Dunham A."/>
            <person name="Dunn M."/>
            <person name="Durbin K.J."/>
            <person name="Dutta I."/>
            <person name="Eades T."/>
            <person name="Ellwood M."/>
            <person name="Emery-Cohen A."/>
            <person name="Errington H."/>
            <person name="Evans K.L."/>
            <person name="Faulkner L."/>
            <person name="Francis F."/>
            <person name="Frankland J."/>
            <person name="Fraser A.E."/>
            <person name="Galgoczy P."/>
            <person name="Gilbert J."/>
            <person name="Gill R."/>
            <person name="Gloeckner G."/>
            <person name="Gregory S.G."/>
            <person name="Gribble S."/>
            <person name="Griffiths C."/>
            <person name="Grocock R."/>
            <person name="Gu Y."/>
            <person name="Gwilliam R."/>
            <person name="Hamilton C."/>
            <person name="Hart E.A."/>
            <person name="Hawes A."/>
            <person name="Heath P.D."/>
            <person name="Heitmann K."/>
            <person name="Hennig S."/>
            <person name="Hernandez J."/>
            <person name="Hinzmann B."/>
            <person name="Ho S."/>
            <person name="Hoffs M."/>
            <person name="Howden P.J."/>
            <person name="Huckle E.J."/>
            <person name="Hume J."/>
            <person name="Hunt P.J."/>
            <person name="Hunt A.R."/>
            <person name="Isherwood J."/>
            <person name="Jacob L."/>
            <person name="Johnson D."/>
            <person name="Jones S."/>
            <person name="de Jong P.J."/>
            <person name="Joseph S.S."/>
            <person name="Keenan S."/>
            <person name="Kelly S."/>
            <person name="Kershaw J.K."/>
            <person name="Khan Z."/>
            <person name="Kioschis P."/>
            <person name="Klages S."/>
            <person name="Knights A.J."/>
            <person name="Kosiura A."/>
            <person name="Kovar-Smith C."/>
            <person name="Laird G.K."/>
            <person name="Langford C."/>
            <person name="Lawlor S."/>
            <person name="Leversha M."/>
            <person name="Lewis L."/>
            <person name="Liu W."/>
            <person name="Lloyd C."/>
            <person name="Lloyd D.M."/>
            <person name="Loulseged H."/>
            <person name="Loveland J.E."/>
            <person name="Lovell J.D."/>
            <person name="Lozado R."/>
            <person name="Lu J."/>
            <person name="Lyne R."/>
            <person name="Ma J."/>
            <person name="Maheshwari M."/>
            <person name="Matthews L.H."/>
            <person name="McDowall J."/>
            <person name="McLaren S."/>
            <person name="McMurray A."/>
            <person name="Meidl P."/>
            <person name="Meitinger T."/>
            <person name="Milne S."/>
            <person name="Miner G."/>
            <person name="Mistry S.L."/>
            <person name="Morgan M."/>
            <person name="Morris S."/>
            <person name="Mueller I."/>
            <person name="Mullikin J.C."/>
            <person name="Nguyen N."/>
            <person name="Nordsiek G."/>
            <person name="Nyakatura G."/>
            <person name="O'dell C.N."/>
            <person name="Okwuonu G."/>
            <person name="Palmer S."/>
            <person name="Pandian R."/>
            <person name="Parker D."/>
            <person name="Parrish J."/>
            <person name="Pasternak S."/>
            <person name="Patel D."/>
            <person name="Pearce A.V."/>
            <person name="Pearson D.M."/>
            <person name="Pelan S.E."/>
            <person name="Perez L."/>
            <person name="Porter K.M."/>
            <person name="Ramsey Y."/>
            <person name="Reichwald K."/>
            <person name="Rhodes S."/>
            <person name="Ridler K.A."/>
            <person name="Schlessinger D."/>
            <person name="Schueler M.G."/>
            <person name="Sehra H.K."/>
            <person name="Shaw-Smith C."/>
            <person name="Shen H."/>
            <person name="Sheridan E.M."/>
            <person name="Shownkeen R."/>
            <person name="Skuce C.D."/>
            <person name="Smith M.L."/>
            <person name="Sotheran E.C."/>
            <person name="Steingruber H.E."/>
            <person name="Steward C.A."/>
            <person name="Storey R."/>
            <person name="Swann R.M."/>
            <person name="Swarbreck D."/>
            <person name="Tabor P.E."/>
            <person name="Taudien S."/>
            <person name="Taylor T."/>
            <person name="Teague B."/>
            <person name="Thomas K."/>
            <person name="Thorpe A."/>
            <person name="Timms K."/>
            <person name="Tracey A."/>
            <person name="Trevanion S."/>
            <person name="Tromans A.C."/>
            <person name="d'Urso M."/>
            <person name="Verduzco D."/>
            <person name="Villasana D."/>
            <person name="Waldron L."/>
            <person name="Wall M."/>
            <person name="Wang Q."/>
            <person name="Warren J."/>
            <person name="Warry G.L."/>
            <person name="Wei X."/>
            <person name="West A."/>
            <person name="Whitehead S.L."/>
            <person name="Whiteley M.N."/>
            <person name="Wilkinson J.E."/>
            <person name="Willey D.L."/>
            <person name="Williams G."/>
            <person name="Williams L."/>
            <person name="Williamson A."/>
            <person name="Williamson H."/>
            <person name="Wilming L."/>
            <person name="Woodmansey R.L."/>
            <person name="Wray P.W."/>
            <person name="Yen J."/>
            <person name="Zhang J."/>
            <person name="Zhou J."/>
            <person name="Zoghbi H."/>
            <person name="Zorilla S."/>
            <person name="Buck D."/>
            <person name="Reinhardt R."/>
            <person name="Poustka A."/>
            <person name="Rosenthal A."/>
            <person name="Lehrach H."/>
            <person name="Meindl A."/>
            <person name="Minx P.J."/>
            <person name="Hillier L.W."/>
            <person name="Willard H.F."/>
            <person name="Wilson R.K."/>
            <person name="Waterston R.H."/>
            <person name="Rice C.M."/>
            <person name="Vaudin M."/>
            <person name="Coulson A."/>
            <person name="Nelson D.L."/>
            <person name="Weinstock G."/>
            <person name="Sulston J.E."/>
            <person name="Durbin R.M."/>
            <person name="Hubbard T."/>
            <person name="Gibbs R.A."/>
            <person name="Beck S."/>
            <person name="Rogers J."/>
            <person name="Bentley D.R."/>
        </authorList>
    </citation>
    <scope>NUCLEOTIDE SEQUENCE [LARGE SCALE GENOMIC DNA]</scope>
</reference>
<reference key="2">
    <citation type="submission" date="2005-09" db="EMBL/GenBank/DDBJ databases">
        <authorList>
            <person name="Mural R.J."/>
            <person name="Istrail S."/>
            <person name="Sutton G.G."/>
            <person name="Florea L."/>
            <person name="Halpern A.L."/>
            <person name="Mobarry C.M."/>
            <person name="Lippert R."/>
            <person name="Walenz B."/>
            <person name="Shatkay H."/>
            <person name="Dew I."/>
            <person name="Miller J.R."/>
            <person name="Flanigan M.J."/>
            <person name="Edwards N.J."/>
            <person name="Bolanos R."/>
            <person name="Fasulo D."/>
            <person name="Halldorsson B.V."/>
            <person name="Hannenhalli S."/>
            <person name="Turner R."/>
            <person name="Yooseph S."/>
            <person name="Lu F."/>
            <person name="Nusskern D.R."/>
            <person name="Shue B.C."/>
            <person name="Zheng X.H."/>
            <person name="Zhong F."/>
            <person name="Delcher A.L."/>
            <person name="Huson D.H."/>
            <person name="Kravitz S.A."/>
            <person name="Mouchard L."/>
            <person name="Reinert K."/>
            <person name="Remington K.A."/>
            <person name="Clark A.G."/>
            <person name="Waterman M.S."/>
            <person name="Eichler E.E."/>
            <person name="Adams M.D."/>
            <person name="Hunkapiller M.W."/>
            <person name="Myers E.W."/>
            <person name="Venter J.C."/>
        </authorList>
    </citation>
    <scope>NUCLEOTIDE SEQUENCE [LARGE SCALE GENOMIC DNA]</scope>
</reference>
<dbReference type="EMBL" id="AC004409">
    <property type="status" value="NOT_ANNOTATED_CDS"/>
    <property type="molecule type" value="Genomic_DNA"/>
</dbReference>
<dbReference type="EMBL" id="CH471107">
    <property type="protein sequence ID" value="EAX11768.1"/>
    <property type="molecule type" value="Genomic_DNA"/>
</dbReference>
<dbReference type="CCDS" id="CCDS48171.1"/>
<dbReference type="RefSeq" id="NP_001094827.1">
    <property type="nucleotide sequence ID" value="NM_001101357.3"/>
</dbReference>
<dbReference type="RefSeq" id="NP_001340382.1">
    <property type="nucleotide sequence ID" value="NM_001353453.3"/>
</dbReference>
<dbReference type="RefSeq" id="NP_001380925.1">
    <property type="nucleotide sequence ID" value="NM_001393996.1"/>
</dbReference>
<dbReference type="RefSeq" id="XP_005262466.1">
    <property type="nucleotide sequence ID" value="XM_005262409.4"/>
</dbReference>
<dbReference type="RefSeq" id="XP_005262467.1">
    <property type="nucleotide sequence ID" value="XM_005262410.4"/>
</dbReference>
<dbReference type="SMR" id="A6NGH7"/>
<dbReference type="BioGRID" id="131441">
    <property type="interactions" value="1"/>
</dbReference>
<dbReference type="FunCoup" id="A6NGH7">
    <property type="interactions" value="1"/>
</dbReference>
<dbReference type="IntAct" id="A6NGH7">
    <property type="interactions" value="1"/>
</dbReference>
<dbReference type="MINT" id="A6NGH7"/>
<dbReference type="STRING" id="9606.ENSP00000427951"/>
<dbReference type="iPTMnet" id="A6NGH7"/>
<dbReference type="PhosphoSitePlus" id="A6NGH7"/>
<dbReference type="BioMuta" id="CCDC160"/>
<dbReference type="jPOST" id="A6NGH7"/>
<dbReference type="MassIVE" id="A6NGH7"/>
<dbReference type="PaxDb" id="9606-ENSP00000427951"/>
<dbReference type="PeptideAtlas" id="A6NGH7"/>
<dbReference type="ProteomicsDB" id="1127"/>
<dbReference type="Antibodypedia" id="50575">
    <property type="antibodies" value="7 antibodies from 4 providers"/>
</dbReference>
<dbReference type="DNASU" id="347475"/>
<dbReference type="Ensembl" id="ENST00000370809.5">
    <property type="protein sequence ID" value="ENSP00000359845.4"/>
    <property type="gene ID" value="ENSG00000203952.10"/>
</dbReference>
<dbReference type="Ensembl" id="ENST00000517294.5">
    <property type="protein sequence ID" value="ENSP00000427951.1"/>
    <property type="gene ID" value="ENSG00000203952.10"/>
</dbReference>
<dbReference type="Ensembl" id="ENST00000695460.1">
    <property type="protein sequence ID" value="ENSP00000511932.1"/>
    <property type="gene ID" value="ENSG00000203952.10"/>
</dbReference>
<dbReference type="GeneID" id="347475"/>
<dbReference type="KEGG" id="hsa:347475"/>
<dbReference type="MANE-Select" id="ENST00000695460.1">
    <property type="protein sequence ID" value="ENSP00000511932.1"/>
    <property type="RefSeq nucleotide sequence ID" value="NM_001353453.3"/>
    <property type="RefSeq protein sequence ID" value="NP_001340382.1"/>
</dbReference>
<dbReference type="UCSC" id="uc011mvj.2">
    <property type="organism name" value="human"/>
</dbReference>
<dbReference type="AGR" id="HGNC:37286"/>
<dbReference type="CTD" id="347475"/>
<dbReference type="GeneCards" id="CCDC160"/>
<dbReference type="HGNC" id="HGNC:37286">
    <property type="gene designation" value="CCDC160"/>
</dbReference>
<dbReference type="HPA" id="ENSG00000203952">
    <property type="expression patterns" value="Tissue enhanced (salivary)"/>
</dbReference>
<dbReference type="neXtProt" id="NX_A6NGH7"/>
<dbReference type="OpenTargets" id="ENSG00000203952"/>
<dbReference type="PharmGKB" id="PA165756450"/>
<dbReference type="VEuPathDB" id="HostDB:ENSG00000203952"/>
<dbReference type="eggNOG" id="ENOG502RVAM">
    <property type="taxonomic scope" value="Eukaryota"/>
</dbReference>
<dbReference type="GeneTree" id="ENSGT00390000013938"/>
<dbReference type="HOGENOM" id="CLU_058746_0_0_1"/>
<dbReference type="InParanoid" id="A6NGH7"/>
<dbReference type="OMA" id="STWTTKE"/>
<dbReference type="OrthoDB" id="5985715at2759"/>
<dbReference type="PAN-GO" id="A6NGH7">
    <property type="GO annotations" value="0 GO annotations based on evolutionary models"/>
</dbReference>
<dbReference type="PhylomeDB" id="A6NGH7"/>
<dbReference type="TreeFam" id="TF351883"/>
<dbReference type="PathwayCommons" id="A6NGH7"/>
<dbReference type="SignaLink" id="A6NGH7"/>
<dbReference type="BioGRID-ORCS" id="347475">
    <property type="hits" value="15 hits in 757 CRISPR screens"/>
</dbReference>
<dbReference type="ChiTaRS" id="CCDC160">
    <property type="organism name" value="human"/>
</dbReference>
<dbReference type="GenomeRNAi" id="347475"/>
<dbReference type="Pharos" id="A6NGH7">
    <property type="development level" value="Tdark"/>
</dbReference>
<dbReference type="PRO" id="PR:A6NGH7"/>
<dbReference type="Proteomes" id="UP000005640">
    <property type="component" value="Chromosome X"/>
</dbReference>
<dbReference type="RNAct" id="A6NGH7">
    <property type="molecule type" value="protein"/>
</dbReference>
<dbReference type="Bgee" id="ENSG00000203952">
    <property type="expression patterns" value="Expressed in oviduct epithelium and 95 other cell types or tissues"/>
</dbReference>
<dbReference type="PANTHER" id="PTHR48251">
    <property type="entry name" value="COILED-COIL DOMAIN-CONTAINING PROTEIN 160"/>
    <property type="match status" value="1"/>
</dbReference>
<dbReference type="PANTHER" id="PTHR48251:SF1">
    <property type="entry name" value="COILED-COIL DOMAIN-CONTAINING PROTEIN 160"/>
    <property type="match status" value="1"/>
</dbReference>
<gene>
    <name type="primary">CCDC160</name>
</gene>
<comment type="similarity">
    <text evidence="3">Belongs to the CCDC160 family.</text>
</comment>
<organism>
    <name type="scientific">Homo sapiens</name>
    <name type="common">Human</name>
    <dbReference type="NCBI Taxonomy" id="9606"/>
    <lineage>
        <taxon>Eukaryota</taxon>
        <taxon>Metazoa</taxon>
        <taxon>Chordata</taxon>
        <taxon>Craniata</taxon>
        <taxon>Vertebrata</taxon>
        <taxon>Euteleostomi</taxon>
        <taxon>Mammalia</taxon>
        <taxon>Eutheria</taxon>
        <taxon>Euarchontoglires</taxon>
        <taxon>Primates</taxon>
        <taxon>Haplorrhini</taxon>
        <taxon>Catarrhini</taxon>
        <taxon>Hominidae</taxon>
        <taxon>Homo</taxon>
    </lineage>
</organism>
<proteinExistence type="evidence at protein level"/>
<sequence length="325" mass="38277">MDARRKHWKENMFTPFFSAQDVLEETSEPESSSEQTTADSSKGMEEIYNLSSRKFQEESKFKRKKYIFQLNEIEQEQNLRENKRNISKNETDTNSASYESSNVDVTTEESFNSTEDNSTCSTDNLPALLRQDIRKKFMERMSPKLCLNLLNEELEELNMKYRKIEEEFENAEKELLHYKKEIFTKPLNFQETETDASKSDYELQALRNDLSEKATNVKNLSEQLQQAKEVIHKLNLENRNLKEAVRKLKHQTEVGNVLLKEEMKSYYELEMAKIRGELSVIKNELRTEKTLQARNNRALELLRKYYASSMVTSSSILDHFTGDFF</sequence>